<feature type="chain" id="PRO_0000052208" description="Ent-kaurene oxidase">
    <location>
        <begin position="1"/>
        <end position="525"/>
    </location>
</feature>
<feature type="transmembrane region" description="Helical" evidence="3">
    <location>
        <begin position="31"/>
        <end position="51"/>
    </location>
</feature>
<feature type="binding site" description="axial binding residue" evidence="1">
    <location>
        <position position="466"/>
    </location>
    <ligand>
        <name>heme</name>
        <dbReference type="ChEBI" id="CHEBI:30413"/>
    </ligand>
    <ligandPart>
        <name>Fe</name>
        <dbReference type="ChEBI" id="CHEBI:18248"/>
    </ligandPart>
</feature>
<proteinExistence type="evidence at protein level"/>
<keyword id="KW-0349">Heme</keyword>
<keyword id="KW-0408">Iron</keyword>
<keyword id="KW-0472">Membrane</keyword>
<keyword id="KW-0479">Metal-binding</keyword>
<keyword id="KW-0503">Monooxygenase</keyword>
<keyword id="KW-0521">NADP</keyword>
<keyword id="KW-0560">Oxidoreductase</keyword>
<keyword id="KW-0346">Stress response</keyword>
<keyword id="KW-0812">Transmembrane</keyword>
<keyword id="KW-1133">Transmembrane helix</keyword>
<protein>
    <recommendedName>
        <fullName>Ent-kaurene oxidase</fullName>
        <ecNumber evidence="2">1.14.14.86</ecNumber>
    </recommendedName>
    <alternativeName>
        <fullName>Cytochrome P450 503A1</fullName>
    </alternativeName>
    <alternativeName>
        <fullName>Cytochrome P450-4</fullName>
    </alternativeName>
</protein>
<accession>O94142</accession>
<evidence type="ECO:0000250" key="1"/>
<evidence type="ECO:0000250" key="2">
    <source>
        <dbReference type="UniProtKB" id="Q93ZB2"/>
    </source>
</evidence>
<evidence type="ECO:0000255" key="3"/>
<evidence type="ECO:0000269" key="4">
    <source>
    </source>
</evidence>
<evidence type="ECO:0000269" key="5">
    <source>
    </source>
</evidence>
<evidence type="ECO:0000305" key="6"/>
<comment type="function">
    <text evidence="4">Catalyzes three successive oxidations of the 4-methyl group of ent-kaurene giving kaurenoic acid, a key step in gibberellin (GA) biosynthesis.</text>
</comment>
<comment type="catalytic activity">
    <reaction evidence="2">
        <text>ent-kaur-16-ene + 3 reduced [NADPH--hemoprotein reductase] + 3 O2 = ent-kaur-16-en-19-oate + 3 oxidized [NADPH--hemoprotein reductase] + 4 H2O + 4 H(+)</text>
        <dbReference type="Rhea" id="RHEA:32323"/>
        <dbReference type="Rhea" id="RHEA-COMP:11964"/>
        <dbReference type="Rhea" id="RHEA-COMP:11965"/>
        <dbReference type="ChEBI" id="CHEBI:15377"/>
        <dbReference type="ChEBI" id="CHEBI:15378"/>
        <dbReference type="ChEBI" id="CHEBI:15379"/>
        <dbReference type="ChEBI" id="CHEBI:15415"/>
        <dbReference type="ChEBI" id="CHEBI:57297"/>
        <dbReference type="ChEBI" id="CHEBI:57618"/>
        <dbReference type="ChEBI" id="CHEBI:58210"/>
        <dbReference type="EC" id="1.14.14.86"/>
    </reaction>
</comment>
<comment type="cofactor">
    <cofactor evidence="1">
        <name>heme</name>
        <dbReference type="ChEBI" id="CHEBI:30413"/>
    </cofactor>
</comment>
<comment type="pathway">
    <text>Plant hormone biosynthesis; gibberellin biosynthesis.</text>
</comment>
<comment type="subcellular location">
    <subcellularLocation>
        <location evidence="6">Membrane</location>
        <topology evidence="6">Single-pass membrane protein</topology>
    </subcellularLocation>
</comment>
<comment type="induction">
    <text evidence="5">By nitrogen starvation.</text>
</comment>
<comment type="similarity">
    <text evidence="6">Belongs to the cytochrome P450 family.</text>
</comment>
<gene>
    <name type="primary">CYP503A1</name>
</gene>
<organism>
    <name type="scientific">Fusarium fujikuroi</name>
    <name type="common">Bakanae and foot rot disease fungus</name>
    <name type="synonym">Gibberella fujikuroi</name>
    <dbReference type="NCBI Taxonomy" id="5127"/>
    <lineage>
        <taxon>Eukaryota</taxon>
        <taxon>Fungi</taxon>
        <taxon>Dikarya</taxon>
        <taxon>Ascomycota</taxon>
        <taxon>Pezizomycotina</taxon>
        <taxon>Sordariomycetes</taxon>
        <taxon>Hypocreomycetidae</taxon>
        <taxon>Hypocreales</taxon>
        <taxon>Nectriaceae</taxon>
        <taxon>Fusarium</taxon>
        <taxon>Fusarium fujikuroi species complex</taxon>
    </lineage>
</organism>
<name>KO1_FUSFU</name>
<reference key="1">
    <citation type="journal article" date="2001" name="Appl. Environ. Microbiol.">
        <title>The P450-4 gene of Gibberella fujikuroi encodes ent-kaurene oxidase in the gibberellin biosynthesis pathway.</title>
        <authorList>
            <person name="Tudzynski B."/>
            <person name="Hedden P."/>
            <person name="Carrera E."/>
            <person name="Gaskin P."/>
        </authorList>
    </citation>
    <scope>NUCLEOTIDE SEQUENCE [GENOMIC DNA]</scope>
    <scope>FUNCTION</scope>
    <scope>CHARACTERIZATION</scope>
    <source>
        <strain>m567</strain>
    </source>
</reference>
<reference key="2">
    <citation type="journal article" date="2003" name="Mol. Microbiol.">
        <title>AREA directly mediates nitrogen regulation of gibberellin biosynthesis in Gibberella fujikuroi, but its activity is not affected by NMR.</title>
        <authorList>
            <person name="Mihlan M."/>
            <person name="Homann V."/>
            <person name="Liu T.-W.D."/>
            <person name="Tudzynski B."/>
        </authorList>
    </citation>
    <scope>INDUCTION</scope>
</reference>
<dbReference type="EC" id="1.14.14.86" evidence="2"/>
<dbReference type="EMBL" id="Y17243">
    <property type="protein sequence ID" value="CAA76703.1"/>
    <property type="molecule type" value="Genomic_DNA"/>
</dbReference>
<dbReference type="SMR" id="O94142"/>
<dbReference type="KEGG" id="ag:CAA76703"/>
<dbReference type="eggNOG" id="KOG0156">
    <property type="taxonomic scope" value="Eukaryota"/>
</dbReference>
<dbReference type="OrthoDB" id="1844152at2759"/>
<dbReference type="BioCyc" id="MetaCyc:MONOMER-11667"/>
<dbReference type="UniPathway" id="UPA00390"/>
<dbReference type="GO" id="GO:0016020">
    <property type="term" value="C:membrane"/>
    <property type="evidence" value="ECO:0007669"/>
    <property type="project" value="UniProtKB-SubCell"/>
</dbReference>
<dbReference type="GO" id="GO:0052615">
    <property type="term" value="F:ent-kaurene oxidase activity"/>
    <property type="evidence" value="ECO:0007669"/>
    <property type="project" value="UniProtKB-EC"/>
</dbReference>
<dbReference type="GO" id="GO:0020037">
    <property type="term" value="F:heme binding"/>
    <property type="evidence" value="ECO:0007669"/>
    <property type="project" value="InterPro"/>
</dbReference>
<dbReference type="GO" id="GO:0005506">
    <property type="term" value="F:iron ion binding"/>
    <property type="evidence" value="ECO:0007669"/>
    <property type="project" value="InterPro"/>
</dbReference>
<dbReference type="GO" id="GO:0009686">
    <property type="term" value="P:gibberellin biosynthetic process"/>
    <property type="evidence" value="ECO:0007669"/>
    <property type="project" value="UniProtKB-UniPathway"/>
</dbReference>
<dbReference type="GO" id="GO:0019748">
    <property type="term" value="P:secondary metabolic process"/>
    <property type="evidence" value="ECO:0007669"/>
    <property type="project" value="UniProtKB-ARBA"/>
</dbReference>
<dbReference type="CDD" id="cd11041">
    <property type="entry name" value="CYP503A1-like"/>
    <property type="match status" value="1"/>
</dbReference>
<dbReference type="Gene3D" id="1.10.630.10">
    <property type="entry name" value="Cytochrome P450"/>
    <property type="match status" value="1"/>
</dbReference>
<dbReference type="InterPro" id="IPR001128">
    <property type="entry name" value="Cyt_P450"/>
</dbReference>
<dbReference type="InterPro" id="IPR002401">
    <property type="entry name" value="Cyt_P450_E_grp-I"/>
</dbReference>
<dbReference type="InterPro" id="IPR036396">
    <property type="entry name" value="Cyt_P450_sf"/>
</dbReference>
<dbReference type="PANTHER" id="PTHR46206">
    <property type="entry name" value="CYTOCHROME P450"/>
    <property type="match status" value="1"/>
</dbReference>
<dbReference type="PANTHER" id="PTHR46206:SF6">
    <property type="entry name" value="CYTOCHROME P450 MONOOXYGENASE AN1598-RELATED"/>
    <property type="match status" value="1"/>
</dbReference>
<dbReference type="Pfam" id="PF00067">
    <property type="entry name" value="p450"/>
    <property type="match status" value="1"/>
</dbReference>
<dbReference type="PRINTS" id="PR00463">
    <property type="entry name" value="EP450I"/>
</dbReference>
<dbReference type="PRINTS" id="PR00385">
    <property type="entry name" value="P450"/>
</dbReference>
<dbReference type="SUPFAM" id="SSF48264">
    <property type="entry name" value="Cytochrome P450"/>
    <property type="match status" value="1"/>
</dbReference>
<sequence>MSKSNSMNSTSHETLFQQLVLGLDRMPLMDVHWLIYVAFGAWLCSYVIHVLSSSSTVKVPVVGYRSVFEPTWLLRLRFVWEGGSIIGQGYNKFKDSIFQVRKLGTDIVIIPPNYIDEVRKLSQDKTRSVEPFINDFAGQYTRGMVFLQSDLQNRVIQQRLTPKLVSLTKVMKEELDYALTKEMPDMKNDEWVEVDISSIMVRLISRISARVFLGPEHCRNQEWLTTTAEYSESLFITGFILRVVPHILRPFIAPLLPSYRTLLRNVSSGRRVIGDIIRSQQGDGNEDILSWMRDAATGEEKQIDNIAQRMLILSLASIHTTAMTMTHAMYDLCACPEYIEPLRDEVKSVVGASGWDKTALNRFHKLDSFLKESQRFNPVFLLTFNRIYHQSMTLSDGTNIPSGTRIAVPSHAMLQDSAHVPGPTPPTEFDGFRYSKIRSDSNYAQKYLFSMTDSSNMAFGYGKYACPGRFYASNEMKLTLAILLLQFEFKLPDGKGRPRNITIDSDMIPDPRARLCVRKRSLRDE</sequence>